<protein>
    <recommendedName>
        <fullName evidence="5">Scaffold protein ILK</fullName>
    </recommendedName>
    <alternativeName>
        <fullName evidence="2">ILK-1</fullName>
    </alternativeName>
    <alternativeName>
        <fullName evidence="2">ILK-2</fullName>
    </alternativeName>
    <alternativeName>
        <fullName evidence="5">Inactive integrin-linked kinase</fullName>
    </alternativeName>
    <alternativeName>
        <fullName evidence="2">p59ILK</fullName>
    </alternativeName>
</protein>
<sequence>MDDIFTQCREGNAVAVRLWLDNTENDLNQGDDHGFSPLHWACREGRSNVVDMLIMRGARINVMNRGDDTPLHLAASHGHRDIVQKLIQFKADINAVNEHGNTPLHYACFWGHDTVAEDLVGNGALVSIANKYSETPIDKAKMPLREILKERAEKLGQNLTKIPYKDTFWKGTTRTRPRNGTLNKLAGIDFKQLSLSQKLNENQSGELWKGRWQGNDIVIKMLKIRDWTTRKSRDFNEEYPKLRIFSHPNVLPVLGACQSPPAPHPIVISHWMPYGSLYNVLHEGTNFVVDQMQAVKFAFDIARGMAFLHTLEPLIPRHHLNSRSIMIDEDMTARISMADVKFSFQCPGRMYAPAWVAPEALQKKPEEINRRSADMWSFAVLLWELVTREVPFADLSNMEIGMKVALEGLRPTIPPGISPHICKLMKICMNEDPAKRPKFDMIVPILEKMQDK</sequence>
<accession>Q9DF58</accession>
<reference evidence="6" key="1">
    <citation type="journal article" date="2001" name="J. Biol. Chem.">
        <title>Ca2+-independent smooth muscle contraction. a novel function for integrin-linked kinase.</title>
        <authorList>
            <person name="Deng J.T."/>
            <person name="Van Lierop J.E."/>
            <person name="Sutherland C."/>
            <person name="Walsh M.P."/>
        </authorList>
    </citation>
    <scope>NUCLEOTIDE SEQUENCE [MRNA]</scope>
    <source>
        <tissue evidence="7">Gizzard</tissue>
    </source>
</reference>
<reference evidence="7" key="2">
    <citation type="journal article" date="2004" name="Nature">
        <title>Sequence and comparative analysis of the chicken genome provide unique perspectives on vertebrate evolution.</title>
        <authorList>
            <person name="Hillier L.W."/>
            <person name="Miller W."/>
            <person name="Birney E."/>
            <person name="Warren W."/>
            <person name="Hardison R.C."/>
            <person name="Ponting C.P."/>
            <person name="Bork P."/>
            <person name="Burt D.W."/>
            <person name="Groenen M.A.M."/>
            <person name="Delany M.E."/>
            <person name="Dodgson J.B."/>
            <person name="Chinwalla A.T."/>
            <person name="Cliften P.F."/>
            <person name="Clifton S.W."/>
            <person name="Delehaunty K.D."/>
            <person name="Fronick C."/>
            <person name="Fulton R.S."/>
            <person name="Graves T.A."/>
            <person name="Kremitzki C."/>
            <person name="Layman D."/>
            <person name="Magrini V."/>
            <person name="McPherson J.D."/>
            <person name="Miner T.L."/>
            <person name="Minx P."/>
            <person name="Nash W.E."/>
            <person name="Nhan M.N."/>
            <person name="Nelson J.O."/>
            <person name="Oddy L.G."/>
            <person name="Pohl C.S."/>
            <person name="Randall-Maher J."/>
            <person name="Smith S.M."/>
            <person name="Wallis J.W."/>
            <person name="Yang S.-P."/>
            <person name="Romanov M.N."/>
            <person name="Rondelli C.M."/>
            <person name="Paton B."/>
            <person name="Smith J."/>
            <person name="Morrice D."/>
            <person name="Daniels L."/>
            <person name="Tempest H.G."/>
            <person name="Robertson L."/>
            <person name="Masabanda J.S."/>
            <person name="Griffin D.K."/>
            <person name="Vignal A."/>
            <person name="Fillon V."/>
            <person name="Jacobbson L."/>
            <person name="Kerje S."/>
            <person name="Andersson L."/>
            <person name="Crooijmans R.P."/>
            <person name="Aerts J."/>
            <person name="van der Poel J.J."/>
            <person name="Ellegren H."/>
            <person name="Caldwell R.B."/>
            <person name="Hubbard S.J."/>
            <person name="Grafham D.V."/>
            <person name="Kierzek A.M."/>
            <person name="McLaren S.R."/>
            <person name="Overton I.M."/>
            <person name="Arakawa H."/>
            <person name="Beattie K.J."/>
            <person name="Bezzubov Y."/>
            <person name="Boardman P.E."/>
            <person name="Bonfield J.K."/>
            <person name="Croning M.D.R."/>
            <person name="Davies R.M."/>
            <person name="Francis M.D."/>
            <person name="Humphray S.J."/>
            <person name="Scott C.E."/>
            <person name="Taylor R.G."/>
            <person name="Tickle C."/>
            <person name="Brown W.R.A."/>
            <person name="Rogers J."/>
            <person name="Buerstedde J.-M."/>
            <person name="Wilson S.A."/>
            <person name="Stubbs L."/>
            <person name="Ovcharenko I."/>
            <person name="Gordon L."/>
            <person name="Lucas S."/>
            <person name="Miller M.M."/>
            <person name="Inoko H."/>
            <person name="Shiina T."/>
            <person name="Kaufman J."/>
            <person name="Salomonsen J."/>
            <person name="Skjoedt K."/>
            <person name="Wong G.K.-S."/>
            <person name="Wang J."/>
            <person name="Liu B."/>
            <person name="Wang J."/>
            <person name="Yu J."/>
            <person name="Yang H."/>
            <person name="Nefedov M."/>
            <person name="Koriabine M."/>
            <person name="Dejong P.J."/>
            <person name="Goodstadt L."/>
            <person name="Webber C."/>
            <person name="Dickens N.J."/>
            <person name="Letunic I."/>
            <person name="Suyama M."/>
            <person name="Torrents D."/>
            <person name="von Mering C."/>
            <person name="Zdobnov E.M."/>
            <person name="Makova K."/>
            <person name="Nekrutenko A."/>
            <person name="Elnitski L."/>
            <person name="Eswara P."/>
            <person name="King D.C."/>
            <person name="Yang S.-P."/>
            <person name="Tyekucheva S."/>
            <person name="Radakrishnan A."/>
            <person name="Harris R.S."/>
            <person name="Chiaromonte F."/>
            <person name="Taylor J."/>
            <person name="He J."/>
            <person name="Rijnkels M."/>
            <person name="Griffiths-Jones S."/>
            <person name="Ureta-Vidal A."/>
            <person name="Hoffman M.M."/>
            <person name="Severin J."/>
            <person name="Searle S.M.J."/>
            <person name="Law A.S."/>
            <person name="Speed D."/>
            <person name="Waddington D."/>
            <person name="Cheng Z."/>
            <person name="Tuzun E."/>
            <person name="Eichler E."/>
            <person name="Bao Z."/>
            <person name="Flicek P."/>
            <person name="Shteynberg D.D."/>
            <person name="Brent M.R."/>
            <person name="Bye J.M."/>
            <person name="Huckle E.J."/>
            <person name="Chatterji S."/>
            <person name="Dewey C."/>
            <person name="Pachter L."/>
            <person name="Kouranov A."/>
            <person name="Mourelatos Z."/>
            <person name="Hatzigeorgiou A.G."/>
            <person name="Paterson A.H."/>
            <person name="Ivarie R."/>
            <person name="Brandstrom M."/>
            <person name="Axelsson E."/>
            <person name="Backstrom N."/>
            <person name="Berlin S."/>
            <person name="Webster M.T."/>
            <person name="Pourquie O."/>
            <person name="Reymond A."/>
            <person name="Ucla C."/>
            <person name="Antonarakis S.E."/>
            <person name="Long M."/>
            <person name="Emerson J.J."/>
            <person name="Betran E."/>
            <person name="Dupanloup I."/>
            <person name="Kaessmann H."/>
            <person name="Hinrichs A.S."/>
            <person name="Bejerano G."/>
            <person name="Furey T.S."/>
            <person name="Harte R.A."/>
            <person name="Raney B."/>
            <person name="Siepel A."/>
            <person name="Kent W.J."/>
            <person name="Haussler D."/>
            <person name="Eyras E."/>
            <person name="Castelo R."/>
            <person name="Abril J.F."/>
            <person name="Castellano S."/>
            <person name="Camara F."/>
            <person name="Parra G."/>
            <person name="Guigo R."/>
            <person name="Bourque G."/>
            <person name="Tesler G."/>
            <person name="Pevzner P.A."/>
            <person name="Smit A."/>
            <person name="Fulton L.A."/>
            <person name="Mardis E.R."/>
            <person name="Wilson R.K."/>
        </authorList>
    </citation>
    <scope>NUCLEOTIDE SEQUENCE [LARGE SCALE GENOMIC DNA]</scope>
    <source>
        <strain evidence="7">Red jungle fowl</strain>
    </source>
</reference>
<reference evidence="5" key="3">
    <citation type="journal article" date="2005" name="J. Biol. Chem.">
        <title>Actopaxin interacts with TESK1 to regulate cell spreading on fibronectin.</title>
        <authorList>
            <person name="LaLonde D.P."/>
            <person name="Brown M.C."/>
            <person name="Bouverat B.P."/>
            <person name="Turner C.E."/>
        </authorList>
    </citation>
    <scope>INTERACTION WITH PXN</scope>
</reference>
<evidence type="ECO:0000250" key="1">
    <source>
        <dbReference type="UniProtKB" id="O55222"/>
    </source>
</evidence>
<evidence type="ECO:0000250" key="2">
    <source>
        <dbReference type="UniProtKB" id="Q13418"/>
    </source>
</evidence>
<evidence type="ECO:0000255" key="3">
    <source>
        <dbReference type="PROSITE-ProRule" id="PRU00159"/>
    </source>
</evidence>
<evidence type="ECO:0000269" key="4">
    <source>
    </source>
</evidence>
<evidence type="ECO:0000305" key="5"/>
<evidence type="ECO:0000312" key="6">
    <source>
        <dbReference type="EMBL" id="AAG18430.1"/>
    </source>
</evidence>
<evidence type="ECO:0000312" key="7">
    <source>
        <dbReference type="Proteomes" id="UP000000539"/>
    </source>
</evidence>
<organism evidence="6">
    <name type="scientific">Gallus gallus</name>
    <name type="common">Chicken</name>
    <dbReference type="NCBI Taxonomy" id="9031"/>
    <lineage>
        <taxon>Eukaryota</taxon>
        <taxon>Metazoa</taxon>
        <taxon>Chordata</taxon>
        <taxon>Craniata</taxon>
        <taxon>Vertebrata</taxon>
        <taxon>Euteleostomi</taxon>
        <taxon>Archelosauria</taxon>
        <taxon>Archosauria</taxon>
        <taxon>Dinosauria</taxon>
        <taxon>Saurischia</taxon>
        <taxon>Theropoda</taxon>
        <taxon>Coelurosauria</taxon>
        <taxon>Aves</taxon>
        <taxon>Neognathae</taxon>
        <taxon>Galloanserae</taxon>
        <taxon>Galliformes</taxon>
        <taxon>Phasianidae</taxon>
        <taxon>Phasianinae</taxon>
        <taxon>Gallus</taxon>
    </lineage>
</organism>
<keyword id="KW-0040">ANK repeat</keyword>
<keyword id="KW-0067">ATP-binding</keyword>
<keyword id="KW-0965">Cell junction</keyword>
<keyword id="KW-1003">Cell membrane</keyword>
<keyword id="KW-0966">Cell projection</keyword>
<keyword id="KW-0963">Cytoplasm</keyword>
<keyword id="KW-0206">Cytoskeleton</keyword>
<keyword id="KW-0460">Magnesium</keyword>
<keyword id="KW-0472">Membrane</keyword>
<keyword id="KW-0479">Metal-binding</keyword>
<keyword id="KW-0547">Nucleotide-binding</keyword>
<keyword id="KW-0539">Nucleus</keyword>
<keyword id="KW-0597">Phosphoprotein</keyword>
<keyword id="KW-1185">Reference proteome</keyword>
<keyword id="KW-0677">Repeat</keyword>
<comment type="function">
    <text evidence="2">Scaffold protein which mediates protein-protein interactions during a range of cellular events including focal adhesion assembly, cell adhesion and cell migration.</text>
</comment>
<comment type="subunit">
    <text evidence="4">Interacts with PXN/PAXILLIN (via LD motif 4).</text>
</comment>
<comment type="subcellular location">
    <subcellularLocation>
        <location evidence="2">Cell junction</location>
        <location evidence="2">Focal adhesion</location>
    </subcellularLocation>
    <subcellularLocation>
        <location evidence="2">Cell membrane</location>
        <topology evidence="2">Peripheral membrane protein</topology>
        <orientation evidence="2">Cytoplasmic side</orientation>
    </subcellularLocation>
    <subcellularLocation>
        <location evidence="1">Cell projection</location>
        <location evidence="1">Lamellipodium</location>
    </subcellularLocation>
    <subcellularLocation>
        <location evidence="2">Cytoplasm</location>
        <location evidence="2">Myofibril</location>
        <location evidence="2">Sarcomere</location>
    </subcellularLocation>
    <subcellularLocation>
        <location evidence="2">Cytoplasm</location>
    </subcellularLocation>
    <subcellularLocation>
        <location evidence="2">Nucleus</location>
    </subcellularLocation>
    <subcellularLocation>
        <location evidence="2">Cytoplasm</location>
        <location evidence="2">Cytoskeleton</location>
        <location evidence="2">Microtubule organizing center</location>
        <location evidence="2">Centrosome</location>
    </subcellularLocation>
    <subcellularLocation>
        <location evidence="2">Cytoplasm</location>
        <location evidence="2">Cell cortex</location>
    </subcellularLocation>
</comment>
<comment type="domain">
    <text evidence="2">The kinase domain is likely to have lost catalytic activity but retains ATP-binding activity. ATP structurally stabilizes the kinase domain.</text>
</comment>
<comment type="similarity">
    <text evidence="5">Belongs to the protein kinase superfamily. TKL Ser/Thr protein kinase family.</text>
</comment>
<comment type="caution">
    <text evidence="2">Was originally thought to act as a serine/threonine-protein kinase. Now thought to be a pseudokinase which does not have kinase activity and which functions solely as a scaffold protein.</text>
</comment>
<gene>
    <name evidence="2" type="primary">ILK</name>
    <name evidence="2" type="synonym">ILK1</name>
    <name evidence="2" type="synonym">ILK2</name>
</gene>
<feature type="chain" id="PRO_0000451828" description="Scaffold protein ILK">
    <location>
        <begin position="1"/>
        <end position="452"/>
    </location>
</feature>
<feature type="repeat" description="ANK 1" evidence="2">
    <location>
        <begin position="2"/>
        <end position="30"/>
    </location>
</feature>
<feature type="repeat" description="ANK 2" evidence="2">
    <location>
        <begin position="31"/>
        <end position="63"/>
    </location>
</feature>
<feature type="repeat" description="ANK 3" evidence="2">
    <location>
        <begin position="64"/>
        <end position="96"/>
    </location>
</feature>
<feature type="repeat" description="ANK 4" evidence="2">
    <location>
        <begin position="97"/>
        <end position="129"/>
    </location>
</feature>
<feature type="repeat" description="ANK 5" evidence="2">
    <location>
        <begin position="130"/>
        <end position="174"/>
    </location>
</feature>
<feature type="domain" description="Protein kinase" evidence="3">
    <location>
        <begin position="193"/>
        <end position="446"/>
    </location>
</feature>
<feature type="short sequence motif" description="Nuclear localization signal" evidence="2">
    <location>
        <begin position="363"/>
        <end position="371"/>
    </location>
</feature>
<feature type="binding site" evidence="2">
    <location>
        <position position="200"/>
    </location>
    <ligand>
        <name>ATP</name>
        <dbReference type="ChEBI" id="CHEBI:30616"/>
    </ligand>
</feature>
<feature type="binding site" evidence="2">
    <location>
        <position position="202"/>
    </location>
    <ligand>
        <name>ATP</name>
        <dbReference type="ChEBI" id="CHEBI:30616"/>
    </ligand>
</feature>
<feature type="binding site" evidence="2">
    <location>
        <position position="204"/>
    </location>
    <ligand>
        <name>ATP</name>
        <dbReference type="ChEBI" id="CHEBI:30616"/>
    </ligand>
</feature>
<feature type="binding site" evidence="2">
    <location>
        <position position="270"/>
    </location>
    <ligand>
        <name>ATP</name>
        <dbReference type="ChEBI" id="CHEBI:30616"/>
    </ligand>
</feature>
<feature type="binding site" evidence="2">
    <location>
        <position position="272"/>
    </location>
    <ligand>
        <name>ATP</name>
        <dbReference type="ChEBI" id="CHEBI:30616"/>
    </ligand>
</feature>
<feature type="binding site" evidence="2">
    <location>
        <position position="279"/>
    </location>
    <ligand>
        <name>ATP</name>
        <dbReference type="ChEBI" id="CHEBI:30616"/>
    </ligand>
</feature>
<feature type="binding site" evidence="2">
    <location>
        <position position="339"/>
    </location>
    <ligand>
        <name>Mg(2+)</name>
        <dbReference type="ChEBI" id="CHEBI:18420"/>
    </ligand>
</feature>
<feature type="binding site" evidence="2">
    <location>
        <position position="341"/>
    </location>
    <ligand>
        <name>ATP</name>
        <dbReference type="ChEBI" id="CHEBI:30616"/>
    </ligand>
</feature>
<name>ILK_CHICK</name>
<dbReference type="EMBL" id="AF296130">
    <property type="protein sequence ID" value="AAG18430.1"/>
    <property type="molecule type" value="mRNA"/>
</dbReference>
<dbReference type="EMBL" id="AADN05001070">
    <property type="status" value="NOT_ANNOTATED_CDS"/>
    <property type="molecule type" value="Genomic_DNA"/>
</dbReference>
<dbReference type="RefSeq" id="NP_989525.1">
    <property type="nucleotide sequence ID" value="NM_204194.2"/>
</dbReference>
<dbReference type="SMR" id="Q9DF58"/>
<dbReference type="FunCoup" id="Q9DF58">
    <property type="interactions" value="2785"/>
</dbReference>
<dbReference type="STRING" id="9031.ENSGALP00000048764"/>
<dbReference type="PaxDb" id="9031-ENSGALP00000027964"/>
<dbReference type="Ensembl" id="ENSGALT00010003873.1">
    <property type="protein sequence ID" value="ENSGALP00010002177.1"/>
    <property type="gene ID" value="ENSGALG00010001689.1"/>
</dbReference>
<dbReference type="GeneID" id="374018"/>
<dbReference type="KEGG" id="gga:374018"/>
<dbReference type="CTD" id="3611"/>
<dbReference type="VEuPathDB" id="HostDB:geneid_374018"/>
<dbReference type="GeneTree" id="ENSGT00940000155956"/>
<dbReference type="HOGENOM" id="CLU_000288_7_5_1"/>
<dbReference type="InParanoid" id="Q9DF58"/>
<dbReference type="OrthoDB" id="6718656at2759"/>
<dbReference type="PhylomeDB" id="Q9DF58"/>
<dbReference type="PRO" id="PR:Q9DF58"/>
<dbReference type="Proteomes" id="UP000000539">
    <property type="component" value="Chromosome 1"/>
</dbReference>
<dbReference type="Bgee" id="ENSGALG00000031642">
    <property type="expression patterns" value="Expressed in granulocyte and 12 other cell types or tissues"/>
</dbReference>
<dbReference type="GO" id="GO:0015629">
    <property type="term" value="C:actin cytoskeleton"/>
    <property type="evidence" value="ECO:0007669"/>
    <property type="project" value="Ensembl"/>
</dbReference>
<dbReference type="GO" id="GO:0005938">
    <property type="term" value="C:cell cortex"/>
    <property type="evidence" value="ECO:0007669"/>
    <property type="project" value="UniProtKB-SubCell"/>
</dbReference>
<dbReference type="GO" id="GO:0005813">
    <property type="term" value="C:centrosome"/>
    <property type="evidence" value="ECO:0007669"/>
    <property type="project" value="UniProtKB-SubCell"/>
</dbReference>
<dbReference type="GO" id="GO:0000785">
    <property type="term" value="C:chromatin"/>
    <property type="evidence" value="ECO:0007669"/>
    <property type="project" value="Ensembl"/>
</dbReference>
<dbReference type="GO" id="GO:0005737">
    <property type="term" value="C:cytoplasm"/>
    <property type="evidence" value="ECO:0000318"/>
    <property type="project" value="GO_Central"/>
</dbReference>
<dbReference type="GO" id="GO:0005829">
    <property type="term" value="C:cytosol"/>
    <property type="evidence" value="ECO:0007669"/>
    <property type="project" value="Ensembl"/>
</dbReference>
<dbReference type="GO" id="GO:0005925">
    <property type="term" value="C:focal adhesion"/>
    <property type="evidence" value="ECO:0007669"/>
    <property type="project" value="UniProtKB-SubCell"/>
</dbReference>
<dbReference type="GO" id="GO:0030027">
    <property type="term" value="C:lamellipodium"/>
    <property type="evidence" value="ECO:0007669"/>
    <property type="project" value="UniProtKB-SubCell"/>
</dbReference>
<dbReference type="GO" id="GO:0005654">
    <property type="term" value="C:nucleoplasm"/>
    <property type="evidence" value="ECO:0007669"/>
    <property type="project" value="Ensembl"/>
</dbReference>
<dbReference type="GO" id="GO:0005886">
    <property type="term" value="C:plasma membrane"/>
    <property type="evidence" value="ECO:0007669"/>
    <property type="project" value="UniProtKB-SubCell"/>
</dbReference>
<dbReference type="GO" id="GO:0030017">
    <property type="term" value="C:sarcomere"/>
    <property type="evidence" value="ECO:0007669"/>
    <property type="project" value="UniProtKB-SubCell"/>
</dbReference>
<dbReference type="GO" id="GO:0005524">
    <property type="term" value="F:ATP binding"/>
    <property type="evidence" value="ECO:0000250"/>
    <property type="project" value="UniProtKB"/>
</dbReference>
<dbReference type="GO" id="GO:0005178">
    <property type="term" value="F:integrin binding"/>
    <property type="evidence" value="ECO:0000250"/>
    <property type="project" value="UniProtKB"/>
</dbReference>
<dbReference type="GO" id="GO:0000287">
    <property type="term" value="F:magnesium ion binding"/>
    <property type="evidence" value="ECO:0000250"/>
    <property type="project" value="UniProtKB"/>
</dbReference>
<dbReference type="GO" id="GO:0004672">
    <property type="term" value="F:protein kinase activity"/>
    <property type="evidence" value="ECO:0000318"/>
    <property type="project" value="GO_Central"/>
</dbReference>
<dbReference type="GO" id="GO:0019901">
    <property type="term" value="F:protein kinase binding"/>
    <property type="evidence" value="ECO:0007669"/>
    <property type="project" value="Ensembl"/>
</dbReference>
<dbReference type="GO" id="GO:0001658">
    <property type="term" value="P:branching involved in ureteric bud morphogenesis"/>
    <property type="evidence" value="ECO:0007669"/>
    <property type="project" value="Ensembl"/>
</dbReference>
<dbReference type="GO" id="GO:0070836">
    <property type="term" value="P:caveola assembly"/>
    <property type="evidence" value="ECO:0007669"/>
    <property type="project" value="Ensembl"/>
</dbReference>
<dbReference type="GO" id="GO:0000902">
    <property type="term" value="P:cell morphogenesis"/>
    <property type="evidence" value="ECO:0007669"/>
    <property type="project" value="Ensembl"/>
</dbReference>
<dbReference type="GO" id="GO:0030030">
    <property type="term" value="P:cell projection organization"/>
    <property type="evidence" value="ECO:0007669"/>
    <property type="project" value="Ensembl"/>
</dbReference>
<dbReference type="GO" id="GO:0045197">
    <property type="term" value="P:establishment or maintenance of epithelial cell apical/basal polarity"/>
    <property type="evidence" value="ECO:0007669"/>
    <property type="project" value="Ensembl"/>
</dbReference>
<dbReference type="GO" id="GO:0010761">
    <property type="term" value="P:fibroblast migration"/>
    <property type="evidence" value="ECO:0007669"/>
    <property type="project" value="Ensembl"/>
</dbReference>
<dbReference type="GO" id="GO:0007229">
    <property type="term" value="P:integrin-mediated signaling pathway"/>
    <property type="evidence" value="ECO:0007669"/>
    <property type="project" value="Ensembl"/>
</dbReference>
<dbReference type="GO" id="GO:0007052">
    <property type="term" value="P:mitotic spindle organization"/>
    <property type="evidence" value="ECO:0007669"/>
    <property type="project" value="Ensembl"/>
</dbReference>
<dbReference type="GO" id="GO:0022011">
    <property type="term" value="P:myelination in peripheral nervous system"/>
    <property type="evidence" value="ECO:0007669"/>
    <property type="project" value="Ensembl"/>
</dbReference>
<dbReference type="GO" id="GO:2000178">
    <property type="term" value="P:negative regulation of neural precursor cell proliferation"/>
    <property type="evidence" value="ECO:0007669"/>
    <property type="project" value="Ensembl"/>
</dbReference>
<dbReference type="GO" id="GO:0021675">
    <property type="term" value="P:nerve development"/>
    <property type="evidence" value="ECO:0007669"/>
    <property type="project" value="Ensembl"/>
</dbReference>
<dbReference type="GO" id="GO:0061351">
    <property type="term" value="P:neural precursor cell proliferation"/>
    <property type="evidence" value="ECO:0007669"/>
    <property type="project" value="Ensembl"/>
</dbReference>
<dbReference type="GO" id="GO:0003151">
    <property type="term" value="P:outflow tract morphogenesis"/>
    <property type="evidence" value="ECO:0007669"/>
    <property type="project" value="Ensembl"/>
</dbReference>
<dbReference type="GO" id="GO:0043491">
    <property type="term" value="P:phosphatidylinositol 3-kinase/protein kinase B signal transduction"/>
    <property type="evidence" value="ECO:0007669"/>
    <property type="project" value="Ensembl"/>
</dbReference>
<dbReference type="GO" id="GO:0030513">
    <property type="term" value="P:positive regulation of BMP signaling pathway"/>
    <property type="evidence" value="ECO:0007669"/>
    <property type="project" value="Ensembl"/>
</dbReference>
<dbReference type="GO" id="GO:0043123">
    <property type="term" value="P:positive regulation of canonical NF-kappaB signal transduction"/>
    <property type="evidence" value="ECO:0007669"/>
    <property type="project" value="Ensembl"/>
</dbReference>
<dbReference type="GO" id="GO:0090263">
    <property type="term" value="P:positive regulation of canonical Wnt signaling pathway"/>
    <property type="evidence" value="ECO:0007669"/>
    <property type="project" value="Ensembl"/>
</dbReference>
<dbReference type="GO" id="GO:0008284">
    <property type="term" value="P:positive regulation of cell population proliferation"/>
    <property type="evidence" value="ECO:0007669"/>
    <property type="project" value="Ensembl"/>
</dbReference>
<dbReference type="GO" id="GO:0045893">
    <property type="term" value="P:positive regulation of DNA-templated transcription"/>
    <property type="evidence" value="ECO:0007669"/>
    <property type="project" value="Ensembl"/>
</dbReference>
<dbReference type="GO" id="GO:0045669">
    <property type="term" value="P:positive regulation of osteoblast differentiation"/>
    <property type="evidence" value="ECO:0007669"/>
    <property type="project" value="Ensembl"/>
</dbReference>
<dbReference type="GO" id="GO:1900026">
    <property type="term" value="P:positive regulation of substrate adhesion-dependent cell spreading"/>
    <property type="evidence" value="ECO:0007669"/>
    <property type="project" value="Ensembl"/>
</dbReference>
<dbReference type="GO" id="GO:0072697">
    <property type="term" value="P:protein localization to cell cortex"/>
    <property type="evidence" value="ECO:0007669"/>
    <property type="project" value="Ensembl"/>
</dbReference>
<dbReference type="GO" id="GO:0007165">
    <property type="term" value="P:signal transduction"/>
    <property type="evidence" value="ECO:0000318"/>
    <property type="project" value="GO_Central"/>
</dbReference>
<dbReference type="GO" id="GO:0034446">
    <property type="term" value="P:substrate adhesion-dependent cell spreading"/>
    <property type="evidence" value="ECO:0007669"/>
    <property type="project" value="Ensembl"/>
</dbReference>
<dbReference type="GO" id="GO:0033209">
    <property type="term" value="P:tumor necrosis factor-mediated signaling pathway"/>
    <property type="evidence" value="ECO:0007669"/>
    <property type="project" value="Ensembl"/>
</dbReference>
<dbReference type="CDD" id="cd14057">
    <property type="entry name" value="PK_ILK"/>
    <property type="match status" value="1"/>
</dbReference>
<dbReference type="FunFam" id="3.30.200.20:FF:000245">
    <property type="entry name" value="Integrin-linked protein kinase"/>
    <property type="match status" value="1"/>
</dbReference>
<dbReference type="FunFam" id="1.10.510.10:FF:000187">
    <property type="entry name" value="integrin-linked protein kinase"/>
    <property type="match status" value="1"/>
</dbReference>
<dbReference type="FunFam" id="1.25.40.20:FF:000050">
    <property type="entry name" value="integrin-linked protein kinase"/>
    <property type="match status" value="1"/>
</dbReference>
<dbReference type="Gene3D" id="1.25.40.20">
    <property type="entry name" value="Ankyrin repeat-containing domain"/>
    <property type="match status" value="1"/>
</dbReference>
<dbReference type="Gene3D" id="3.30.200.20">
    <property type="entry name" value="Phosphorylase Kinase, domain 1"/>
    <property type="match status" value="1"/>
</dbReference>
<dbReference type="Gene3D" id="1.10.510.10">
    <property type="entry name" value="Transferase(Phosphotransferase) domain 1"/>
    <property type="match status" value="1"/>
</dbReference>
<dbReference type="InterPro" id="IPR002110">
    <property type="entry name" value="Ankyrin_rpt"/>
</dbReference>
<dbReference type="InterPro" id="IPR036770">
    <property type="entry name" value="Ankyrin_rpt-contain_sf"/>
</dbReference>
<dbReference type="InterPro" id="IPR011009">
    <property type="entry name" value="Kinase-like_dom_sf"/>
</dbReference>
<dbReference type="InterPro" id="IPR035692">
    <property type="entry name" value="PK_ILK"/>
</dbReference>
<dbReference type="InterPro" id="IPR000719">
    <property type="entry name" value="Prot_kinase_dom"/>
</dbReference>
<dbReference type="InterPro" id="IPR001245">
    <property type="entry name" value="Ser-Thr/Tyr_kinase_cat_dom"/>
</dbReference>
<dbReference type="InterPro" id="IPR051681">
    <property type="entry name" value="Ser/Thr_Kinases-Pseudokinases"/>
</dbReference>
<dbReference type="PANTHER" id="PTHR44329:SF57">
    <property type="entry name" value="INTEGRIN-LINKED PROTEIN KINASE"/>
    <property type="match status" value="1"/>
</dbReference>
<dbReference type="PANTHER" id="PTHR44329">
    <property type="entry name" value="SERINE/THREONINE-PROTEIN KINASE TNNI3K-RELATED"/>
    <property type="match status" value="1"/>
</dbReference>
<dbReference type="Pfam" id="PF12796">
    <property type="entry name" value="Ank_2"/>
    <property type="match status" value="1"/>
</dbReference>
<dbReference type="Pfam" id="PF07714">
    <property type="entry name" value="PK_Tyr_Ser-Thr"/>
    <property type="match status" value="1"/>
</dbReference>
<dbReference type="PIRSF" id="PIRSF000654">
    <property type="entry name" value="Integrin-linked_kinase"/>
    <property type="match status" value="1"/>
</dbReference>
<dbReference type="SMART" id="SM00248">
    <property type="entry name" value="ANK"/>
    <property type="match status" value="3"/>
</dbReference>
<dbReference type="SUPFAM" id="SSF48403">
    <property type="entry name" value="Ankyrin repeat"/>
    <property type="match status" value="1"/>
</dbReference>
<dbReference type="SUPFAM" id="SSF56112">
    <property type="entry name" value="Protein kinase-like (PK-like)"/>
    <property type="match status" value="1"/>
</dbReference>
<dbReference type="PROSITE" id="PS50297">
    <property type="entry name" value="ANK_REP_REGION"/>
    <property type="match status" value="1"/>
</dbReference>
<dbReference type="PROSITE" id="PS50088">
    <property type="entry name" value="ANK_REPEAT"/>
    <property type="match status" value="3"/>
</dbReference>
<dbReference type="PROSITE" id="PS50011">
    <property type="entry name" value="PROTEIN_KINASE_DOM"/>
    <property type="match status" value="1"/>
</dbReference>
<proteinExistence type="evidence at protein level"/>